<organism>
    <name type="scientific">Caenorhabditis elegans</name>
    <dbReference type="NCBI Taxonomy" id="6239"/>
    <lineage>
        <taxon>Eukaryota</taxon>
        <taxon>Metazoa</taxon>
        <taxon>Ecdysozoa</taxon>
        <taxon>Nematoda</taxon>
        <taxon>Chromadorea</taxon>
        <taxon>Rhabditida</taxon>
        <taxon>Rhabditina</taxon>
        <taxon>Rhabditomorpha</taxon>
        <taxon>Rhabditoidea</taxon>
        <taxon>Rhabditidae</taxon>
        <taxon>Peloderinae</taxon>
        <taxon>Caenorhabditis</taxon>
    </lineage>
</organism>
<dbReference type="EMBL" id="Z22181">
    <property type="protein sequence ID" value="CAA80183.1"/>
    <property type="molecule type" value="Genomic_DNA"/>
</dbReference>
<dbReference type="PIR" id="S40938">
    <property type="entry name" value="S40938"/>
</dbReference>
<dbReference type="RefSeq" id="NP_499176.1">
    <property type="nucleotide sequence ID" value="NM_066775.7"/>
</dbReference>
<dbReference type="SMR" id="P34652"/>
<dbReference type="BioGRID" id="41584">
    <property type="interactions" value="7"/>
</dbReference>
<dbReference type="DIP" id="DIP-25990N"/>
<dbReference type="FunCoup" id="P34652">
    <property type="interactions" value="1527"/>
</dbReference>
<dbReference type="IntAct" id="P34652">
    <property type="interactions" value="2"/>
</dbReference>
<dbReference type="STRING" id="6239.ZK632.6a.1"/>
<dbReference type="GlyCosmos" id="P34652">
    <property type="glycosylation" value="2 sites, No reported glycans"/>
</dbReference>
<dbReference type="iPTMnet" id="P34652"/>
<dbReference type="PaxDb" id="6239-ZK632.6"/>
<dbReference type="PeptideAtlas" id="P34652"/>
<dbReference type="EnsemblMetazoa" id="ZK632.6a.1">
    <property type="protein sequence ID" value="ZK632.6a.1"/>
    <property type="gene ID" value="WBGene00000567"/>
</dbReference>
<dbReference type="GeneID" id="176390"/>
<dbReference type="KEGG" id="cel:CELE_ZK632.6"/>
<dbReference type="UCSC" id="ZK632.6">
    <property type="organism name" value="c. elegans"/>
</dbReference>
<dbReference type="AGR" id="WB:WBGene00000567"/>
<dbReference type="CTD" id="176390"/>
<dbReference type="WormBase" id="ZK632.6a">
    <property type="protein sequence ID" value="CE00423"/>
    <property type="gene ID" value="WBGene00000567"/>
    <property type="gene designation" value="cnx-1"/>
</dbReference>
<dbReference type="eggNOG" id="KOG0675">
    <property type="taxonomic scope" value="Eukaryota"/>
</dbReference>
<dbReference type="InParanoid" id="P34652"/>
<dbReference type="OMA" id="IWAVEES"/>
<dbReference type="OrthoDB" id="1938156at2759"/>
<dbReference type="PhylomeDB" id="P34652"/>
<dbReference type="Reactome" id="R-CEL-901042">
    <property type="pathway name" value="Calnexin/calreticulin cycle"/>
</dbReference>
<dbReference type="PRO" id="PR:P34652"/>
<dbReference type="Proteomes" id="UP000001940">
    <property type="component" value="Chromosome III"/>
</dbReference>
<dbReference type="Bgee" id="WBGene00000567">
    <property type="expression patterns" value="Expressed in pharyngeal muscle cell (C elegans) and 4 other cell types or tissues"/>
</dbReference>
<dbReference type="ExpressionAtlas" id="P34652">
    <property type="expression patterns" value="baseline and differential"/>
</dbReference>
<dbReference type="GO" id="GO:0031410">
    <property type="term" value="C:cytoplasmic vesicle"/>
    <property type="evidence" value="ECO:0007669"/>
    <property type="project" value="UniProtKB-KW"/>
</dbReference>
<dbReference type="GO" id="GO:0005789">
    <property type="term" value="C:endoplasmic reticulum membrane"/>
    <property type="evidence" value="ECO:0000250"/>
    <property type="project" value="WormBase"/>
</dbReference>
<dbReference type="GO" id="GO:0048471">
    <property type="term" value="C:perinuclear region of cytoplasm"/>
    <property type="evidence" value="ECO:0000314"/>
    <property type="project" value="WormBase"/>
</dbReference>
<dbReference type="GO" id="GO:0005509">
    <property type="term" value="F:calcium ion binding"/>
    <property type="evidence" value="ECO:0000314"/>
    <property type="project" value="WormBase"/>
</dbReference>
<dbReference type="GO" id="GO:0030246">
    <property type="term" value="F:carbohydrate binding"/>
    <property type="evidence" value="ECO:0007669"/>
    <property type="project" value="UniProtKB-KW"/>
</dbReference>
<dbReference type="GO" id="GO:0051082">
    <property type="term" value="F:unfolded protein binding"/>
    <property type="evidence" value="ECO:0007669"/>
    <property type="project" value="InterPro"/>
</dbReference>
<dbReference type="GO" id="GO:0030968">
    <property type="term" value="P:endoplasmic reticulum unfolded protein response"/>
    <property type="evidence" value="ECO:0000315"/>
    <property type="project" value="WormBase"/>
</dbReference>
<dbReference type="GO" id="GO:0036503">
    <property type="term" value="P:ERAD pathway"/>
    <property type="evidence" value="ECO:0000318"/>
    <property type="project" value="GO_Central"/>
</dbReference>
<dbReference type="GO" id="GO:0036498">
    <property type="term" value="P:IRE1-mediated unfolded protein response"/>
    <property type="evidence" value="ECO:0000315"/>
    <property type="project" value="WormBase"/>
</dbReference>
<dbReference type="GO" id="GO:0006457">
    <property type="term" value="P:protein folding"/>
    <property type="evidence" value="ECO:0000318"/>
    <property type="project" value="GO_Central"/>
</dbReference>
<dbReference type="GO" id="GO:0009408">
    <property type="term" value="P:response to heat"/>
    <property type="evidence" value="ECO:0000270"/>
    <property type="project" value="WormBase"/>
</dbReference>
<dbReference type="FunFam" id="2.10.250.10:FF:000001">
    <property type="entry name" value="Calnexin homolog"/>
    <property type="match status" value="1"/>
</dbReference>
<dbReference type="FunFam" id="2.60.120.200:FF:000011">
    <property type="entry name" value="Probable calnexin"/>
    <property type="match status" value="1"/>
</dbReference>
<dbReference type="Gene3D" id="2.60.120.200">
    <property type="match status" value="1"/>
</dbReference>
<dbReference type="Gene3D" id="2.10.250.10">
    <property type="entry name" value="Calreticulin/calnexin, P domain"/>
    <property type="match status" value="1"/>
</dbReference>
<dbReference type="InterPro" id="IPR001580">
    <property type="entry name" value="Calret/calnex"/>
</dbReference>
<dbReference type="InterPro" id="IPR018124">
    <property type="entry name" value="Calret/calnex_CS"/>
</dbReference>
<dbReference type="InterPro" id="IPR009033">
    <property type="entry name" value="Calreticulin/calnexin_P_dom_sf"/>
</dbReference>
<dbReference type="InterPro" id="IPR013320">
    <property type="entry name" value="ConA-like_dom_sf"/>
</dbReference>
<dbReference type="PANTHER" id="PTHR11073:SF1">
    <property type="entry name" value="CALNEXIN 14D-RELATED"/>
    <property type="match status" value="1"/>
</dbReference>
<dbReference type="PANTHER" id="PTHR11073">
    <property type="entry name" value="CALRETICULIN AND CALNEXIN"/>
    <property type="match status" value="1"/>
</dbReference>
<dbReference type="Pfam" id="PF00262">
    <property type="entry name" value="Calreticulin"/>
    <property type="match status" value="1"/>
</dbReference>
<dbReference type="PRINTS" id="PR00626">
    <property type="entry name" value="CALRETICULIN"/>
</dbReference>
<dbReference type="SUPFAM" id="SSF49899">
    <property type="entry name" value="Concanavalin A-like lectins/glucanases"/>
    <property type="match status" value="1"/>
</dbReference>
<dbReference type="SUPFAM" id="SSF63887">
    <property type="entry name" value="P-domain of calnexin/calreticulin"/>
    <property type="match status" value="1"/>
</dbReference>
<dbReference type="PROSITE" id="PS00803">
    <property type="entry name" value="CALRETICULIN_1"/>
    <property type="match status" value="1"/>
</dbReference>
<dbReference type="PROSITE" id="PS00804">
    <property type="entry name" value="CALRETICULIN_2"/>
    <property type="match status" value="1"/>
</dbReference>
<dbReference type="PROSITE" id="PS00805">
    <property type="entry name" value="CALRETICULIN_REPEAT"/>
    <property type="match status" value="1"/>
</dbReference>
<sequence length="619" mass="69208">MVNRKWMYIFIQFLLVSSIRSDDDVFEDDEEEVTKGSDDKEEFVPSLFVAPKLSDKSTPNFFDYFPVGSKIGLTWIKSLAKKDDVDSDIAKYNGEWSIGAPTKVSIEGDLGLIVKTKARHHAIAAKLNTPFAFDANTFVVQYDIKFEEGQECGGGYLKLLSEGAEKDLANFQDKTAYTIMFGPDKCGATGKVHLIFRYKNPINGTISEYHANQPTTIGSTYWDDHNTHLFTLVVKPTGEYSVSVDGKSLYYGNMMSDVTPALTPPKQIFDETDLKPVDWDERENIEDESAVKPDDWDENEPQSVVDEAATKPYDWNEEENELIADPEAKKPQDWDEDMDGSWEAPLIDNPACKGLSGCGTWKAPTIKNPKYKGKWIRPKISNPAFKGKWTARLIDNPNYFEPKPFAGLAPITAVGIEMWTMSENILFDNILITSSEEDSSDVAKQTFYVKQKEEYRLAAATGNGNGFFQQIIDATNEKPWLWAVYILCVLLPLVAIGVFCFGKQSKPTPNFAKKSDAYSADDDRVPNLVDDDEEEIIGDEEDDVNQPGPSGSQSNPEPQDEEENAEQQSANSSQSSAAEEEDDEHVVPENEPVKPTEEFAKKSPKNTGGAKRRTARRGD</sequence>
<feature type="signal peptide" evidence="3">
    <location>
        <begin position="1"/>
        <end position="21"/>
    </location>
</feature>
<feature type="chain" id="PRO_0000004207" description="Calnexin">
    <location>
        <begin position="22"/>
        <end position="619"/>
    </location>
</feature>
<feature type="transmembrane region" description="Helical" evidence="3">
    <location>
        <begin position="481"/>
        <end position="501"/>
    </location>
</feature>
<feature type="repeat" description="1-1">
    <location>
        <begin position="270"/>
        <end position="282"/>
    </location>
</feature>
<feature type="repeat" description="1-2">
    <location>
        <begin position="287"/>
        <end position="299"/>
    </location>
</feature>
<feature type="repeat" description="1-3">
    <location>
        <begin position="306"/>
        <end position="318"/>
    </location>
</feature>
<feature type="repeat" description="1-4">
    <location>
        <begin position="325"/>
        <end position="337"/>
    </location>
</feature>
<feature type="repeat" description="2-1">
    <location>
        <begin position="340"/>
        <end position="350"/>
    </location>
</feature>
<feature type="repeat" description="2-2">
    <location>
        <begin position="359"/>
        <end position="369"/>
    </location>
</feature>
<feature type="repeat" description="2-3">
    <location>
        <begin position="373"/>
        <end position="383"/>
    </location>
</feature>
<feature type="repeat" description="2-4">
    <location>
        <begin position="387"/>
        <end position="397"/>
    </location>
</feature>
<feature type="region of interest" description="P domain (Extended arm)" evidence="1">
    <location>
        <begin position="268"/>
        <end position="401"/>
    </location>
</feature>
<feature type="region of interest" description="4 X approximate repeats">
    <location>
        <begin position="270"/>
        <end position="337"/>
    </location>
</feature>
<feature type="region of interest" description="4 X approximate repeats">
    <location>
        <begin position="340"/>
        <end position="397"/>
    </location>
</feature>
<feature type="region of interest" description="Disordered" evidence="4">
    <location>
        <begin position="538"/>
        <end position="619"/>
    </location>
</feature>
<feature type="compositionally biased region" description="Polar residues" evidence="4">
    <location>
        <begin position="547"/>
        <end position="557"/>
    </location>
</feature>
<feature type="compositionally biased region" description="Low complexity" evidence="4">
    <location>
        <begin position="566"/>
        <end position="577"/>
    </location>
</feature>
<feature type="compositionally biased region" description="Basic and acidic residues" evidence="4">
    <location>
        <begin position="585"/>
        <end position="601"/>
    </location>
</feature>
<feature type="compositionally biased region" description="Basic residues" evidence="4">
    <location>
        <begin position="610"/>
        <end position="619"/>
    </location>
</feature>
<feature type="binding site" evidence="1">
    <location>
        <position position="109"/>
    </location>
    <ligand>
        <name>Ca(2+)</name>
        <dbReference type="ChEBI" id="CHEBI:29108"/>
    </ligand>
</feature>
<feature type="binding site" evidence="2">
    <location>
        <position position="156"/>
    </location>
    <ligand>
        <name>an alpha-D-glucoside</name>
        <dbReference type="ChEBI" id="CHEBI:22390"/>
    </ligand>
</feature>
<feature type="binding site" evidence="2">
    <location>
        <position position="158"/>
    </location>
    <ligand>
        <name>an alpha-D-glucoside</name>
        <dbReference type="ChEBI" id="CHEBI:22390"/>
    </ligand>
</feature>
<feature type="binding site" evidence="2">
    <location>
        <position position="177"/>
    </location>
    <ligand>
        <name>an alpha-D-glucoside</name>
        <dbReference type="ChEBI" id="CHEBI:22390"/>
    </ligand>
</feature>
<feature type="binding site" evidence="2">
    <location>
        <position position="184"/>
    </location>
    <ligand>
        <name>an alpha-D-glucoside</name>
        <dbReference type="ChEBI" id="CHEBI:22390"/>
    </ligand>
</feature>
<feature type="binding site" evidence="2">
    <location>
        <position position="417"/>
    </location>
    <ligand>
        <name>an alpha-D-glucoside</name>
        <dbReference type="ChEBI" id="CHEBI:22390"/>
    </ligand>
</feature>
<feature type="binding site" evidence="1">
    <location>
        <position position="428"/>
    </location>
    <ligand>
        <name>Ca(2+)</name>
        <dbReference type="ChEBI" id="CHEBI:29108"/>
    </ligand>
</feature>
<feature type="glycosylation site" description="N-linked (GlcNAc...) asparagine" evidence="6">
    <location>
        <position position="203"/>
    </location>
</feature>
<feature type="glycosylation site" description="N-linked (GlcNAc...) asparagine" evidence="6">
    <location>
        <position position="571"/>
    </location>
</feature>
<feature type="disulfide bond" evidence="1">
    <location>
        <begin position="152"/>
        <end position="186"/>
    </location>
</feature>
<feature type="disulfide bond" evidence="1">
    <location>
        <begin position="352"/>
        <end position="358"/>
    </location>
</feature>
<feature type="mutagenesis site" description="Impairs its biological function; when associated with Q-571." evidence="6">
    <original>N</original>
    <variation>Q</variation>
    <location>
        <position position="203"/>
    </location>
</feature>
<feature type="mutagenesis site" description="Impairs its biological function; when associated with Q-203." evidence="6">
    <original>N</original>
    <variation>Q</variation>
    <location>
        <position position="571"/>
    </location>
</feature>
<protein>
    <recommendedName>
        <fullName>Calnexin</fullName>
        <shortName>CeCNX-1</shortName>
    </recommendedName>
</protein>
<reference key="1">
    <citation type="journal article" date="2005" name="Biochem. Biophys. Res. Commun.">
        <title>Caenorhabditis elegans calnexin is N-glycosylated and required for stress response.</title>
        <authorList>
            <person name="Lee W."/>
            <person name="Lee T.H."/>
            <person name="Park B.J."/>
            <person name="Chang J.W."/>
            <person name="Yu J.R."/>
            <person name="Koo H.S."/>
            <person name="Park H."/>
            <person name="Yoo Y.J."/>
            <person name="Ahnn J."/>
        </authorList>
    </citation>
    <scope>NUCLEOTIDE SEQUENCE [MRNA]</scope>
    <scope>FUNCTION</scope>
    <scope>SUBCELLULAR LOCATION</scope>
    <scope>TISSUE SPECIFICITY</scope>
    <scope>DEVELOPMENTAL STAGE</scope>
    <scope>INDUCTION</scope>
    <scope>DISRUPTION PHENOTYPE</scope>
    <scope>GLYCOSYLATION AT ASN-203 AND ASN-571</scope>
    <scope>MUTAGENESIS OF ASN-203 AND ASN-571</scope>
    <source>
        <strain>Bristol N2</strain>
    </source>
</reference>
<reference key="2">
    <citation type="journal article" date="1994" name="Nature">
        <title>2.2 Mb of contiguous nucleotide sequence from chromosome III of C. elegans.</title>
        <authorList>
            <person name="Wilson R."/>
            <person name="Ainscough R."/>
            <person name="Anderson K."/>
            <person name="Baynes C."/>
            <person name="Berks M."/>
            <person name="Bonfield J."/>
            <person name="Burton J."/>
            <person name="Connell M."/>
            <person name="Copsey T."/>
            <person name="Cooper J."/>
            <person name="Coulson A."/>
            <person name="Craxton M."/>
            <person name="Dear S."/>
            <person name="Du Z."/>
            <person name="Durbin R."/>
            <person name="Favello A."/>
            <person name="Fraser A."/>
            <person name="Fulton L."/>
            <person name="Gardner A."/>
            <person name="Green P."/>
            <person name="Hawkins T."/>
            <person name="Hillier L."/>
            <person name="Jier M."/>
            <person name="Johnston L."/>
            <person name="Jones M."/>
            <person name="Kershaw J."/>
            <person name="Kirsten J."/>
            <person name="Laisster N."/>
            <person name="Latreille P."/>
            <person name="Lightning J."/>
            <person name="Lloyd C."/>
            <person name="Mortimore B."/>
            <person name="O'Callaghan M."/>
            <person name="Parsons J."/>
            <person name="Percy C."/>
            <person name="Rifken L."/>
            <person name="Roopra A."/>
            <person name="Saunders D."/>
            <person name="Shownkeen R."/>
            <person name="Sims M."/>
            <person name="Smaldon N."/>
            <person name="Smith A."/>
            <person name="Smith M."/>
            <person name="Sonnhammer E."/>
            <person name="Staden R."/>
            <person name="Sulston J."/>
            <person name="Thierry-Mieg J."/>
            <person name="Thomas K."/>
            <person name="Vaudin M."/>
            <person name="Vaughan K."/>
            <person name="Waterston R."/>
            <person name="Watson A."/>
            <person name="Weinstock L."/>
            <person name="Wilkinson-Sproat J."/>
            <person name="Wohldman P."/>
        </authorList>
    </citation>
    <scope>NUCLEOTIDE SEQUENCE [LARGE SCALE GENOMIC DNA]</scope>
    <source>
        <strain>Bristol N2</strain>
    </source>
</reference>
<reference key="3">
    <citation type="journal article" date="1998" name="Science">
        <title>Genome sequence of the nematode C. elegans: a platform for investigating biology.</title>
        <authorList>
            <consortium name="The C. elegans sequencing consortium"/>
        </authorList>
    </citation>
    <scope>NUCLEOTIDE SEQUENCE [LARGE SCALE GENOMIC DNA]</scope>
    <source>
        <strain>Bristol N2</strain>
    </source>
</reference>
<reference key="4">
    <citation type="journal article" date="2001" name="Neuron">
        <title>Necrotic cell death in C. elegans requires the function of calreticulin and regulators of Ca(2+) release from the endoplasmic reticulum.</title>
        <authorList>
            <person name="Xu K."/>
            <person name="Tavernarakis N."/>
            <person name="Driscoll M."/>
        </authorList>
    </citation>
    <scope>FUNCTION</scope>
</reference>
<evidence type="ECO:0000250" key="1"/>
<evidence type="ECO:0000250" key="2">
    <source>
        <dbReference type="UniProtKB" id="P14211"/>
    </source>
</evidence>
<evidence type="ECO:0000255" key="3"/>
<evidence type="ECO:0000256" key="4">
    <source>
        <dbReference type="SAM" id="MobiDB-lite"/>
    </source>
</evidence>
<evidence type="ECO:0000269" key="5">
    <source>
    </source>
</evidence>
<evidence type="ECO:0000269" key="6">
    <source>
    </source>
</evidence>
<evidence type="ECO:0000305" key="7"/>
<comment type="function">
    <text evidence="1 5 6">Calcium-binding protein that interacts with newly synthesized monoglucosylated glycoproteins in the endoplasmic reticulum. It may act in assisting protein assembly and/or in the retention within the ER of unassembled protein subunits. It seems to play a major role in the quality control apparatus of the ER by the retention of incorrectly folded proteins (By similarity). Required for embryogenesis and larval development under heat and ER stress conditions. May be important for germ cell development. Involved in neuronal necrotic cell death.</text>
</comment>
<comment type="subcellular location">
    <subcellularLocation>
        <location evidence="1">Endoplasmic reticulum membrane</location>
        <topology evidence="1">Single-pass type I membrane protein</topology>
    </subcellularLocation>
    <subcellularLocation>
        <location evidence="6">Cytoplasm</location>
        <location evidence="6">Perinuclear region</location>
    </subcellularLocation>
    <subcellularLocation>
        <location evidence="6">Cytoplasmic vesicle</location>
    </subcellularLocation>
    <text>Perinuclear localization in excretory and germ cells. In intestinal cells, clustered signals around vacuoles with vesicles are detected.</text>
</comment>
<comment type="tissue specificity">
    <text evidence="6">Expressed ubiquitously in every blastomere of the embryo up to the gastrulation stage. Expression becomes gradually restricted to the head and tail regions at the comma stage during embryogenesis. During postembryonic development, expressed prominently in the H-shaped excretory cell, in the neurons of head (including ASK and ADL) and tail (including PHA and PHB), in the dorsal and ventral nerve cords, and in the spermatheca. Expressed in the spicules of the male tail (at protein level).</text>
</comment>
<comment type="developmental stage">
    <text evidence="6">Expressed both maternally and zygotically.</text>
</comment>
<comment type="induction">
    <text evidence="6">By stress conditions, such as higher temperature, EGTA, DTT or tunicamycin (at protein level).</text>
</comment>
<comment type="PTM">
    <text evidence="6">Glycosylation is important for its biological activity.</text>
</comment>
<comment type="disruption phenotype">
    <text evidence="6">Reduced fertility and slowed development. Temperature-sensitive reproduction defects.</text>
</comment>
<comment type="similarity">
    <text evidence="7">Belongs to the calreticulin family.</text>
</comment>
<name>CALX_CAEEL</name>
<accession>P34652</accession>
<proteinExistence type="evidence at protein level"/>
<keyword id="KW-0106">Calcium</keyword>
<keyword id="KW-0143">Chaperone</keyword>
<keyword id="KW-0963">Cytoplasm</keyword>
<keyword id="KW-0968">Cytoplasmic vesicle</keyword>
<keyword id="KW-0217">Developmental protein</keyword>
<keyword id="KW-1015">Disulfide bond</keyword>
<keyword id="KW-0256">Endoplasmic reticulum</keyword>
<keyword id="KW-0325">Glycoprotein</keyword>
<keyword id="KW-0430">Lectin</keyword>
<keyword id="KW-0472">Membrane</keyword>
<keyword id="KW-0479">Metal-binding</keyword>
<keyword id="KW-1185">Reference proteome</keyword>
<keyword id="KW-0677">Repeat</keyword>
<keyword id="KW-0732">Signal</keyword>
<keyword id="KW-0346">Stress response</keyword>
<keyword id="KW-0812">Transmembrane</keyword>
<keyword id="KW-1133">Transmembrane helix</keyword>
<gene>
    <name type="primary">cnx-1</name>
    <name type="ORF">ZK632.6</name>
</gene>